<evidence type="ECO:0000255" key="1">
    <source>
        <dbReference type="HAMAP-Rule" id="MF_00484"/>
    </source>
</evidence>
<keyword id="KW-0320">Glycogen biosynthesis</keyword>
<keyword id="KW-0328">Glycosyltransferase</keyword>
<keyword id="KW-0808">Transferase</keyword>
<accession>A9IMI9</accession>
<feature type="chain" id="PRO_1000126056" description="Glycogen synthase">
    <location>
        <begin position="1"/>
        <end position="521"/>
    </location>
</feature>
<feature type="binding site" evidence="1">
    <location>
        <position position="18"/>
    </location>
    <ligand>
        <name>ADP-alpha-D-glucose</name>
        <dbReference type="ChEBI" id="CHEBI:57498"/>
    </ligand>
</feature>
<sequence>MARTSSLMVTSEAFPLAKSGGLGDAVTGLARALSRAGVDTGILMPAYRGVLDRVVGIRHIAHLAGMPGGEATLVGALCPESGLPFYLLCNPGLYDRDGLYLDEQGQPYADNAVRFAALAHAAMRVAAGLPGMRRPDILHAQDWHAGLVPLLVRAAGLRYVKTVLTVHNLAFQGSFELECAGQIGVPGAYCTDDGARLHGRINFMKAGLRYADRITTVSRNYAREIMTPEFGCGLDPLLRARAADLAPIPNGIDDALWNPASDPHLGHLCYSARNPARKSRAKAALQKAFGLHPDQGAALLAMGSRLTSQKMADVAVEALPDALHRHPSLQVAIIGRGERQYEIELEALAARYPGRCAVRIGYDETTAHRLHAGADMLLHGSRFEPFGLTPLYAMRYGAVPIASRVGGMADTIVDPGEREGSQAMLAATGILFDGDGAPDMGHAIDRALRLYAQPAIWRSMQRNGMACEFGWNTAAQPYLDLFENMVDAPRRGRVPAPTIRPAPLPAYARSSLDGMPAPAAY</sequence>
<reference key="1">
    <citation type="journal article" date="2008" name="BMC Genomics">
        <title>The missing link: Bordetella petrii is endowed with both the metabolic versatility of environmental bacteria and virulence traits of pathogenic Bordetellae.</title>
        <authorList>
            <person name="Gross R."/>
            <person name="Guzman C.A."/>
            <person name="Sebaihia M."/>
            <person name="Martin dos Santos V.A.P."/>
            <person name="Pieper D.H."/>
            <person name="Koebnik R."/>
            <person name="Lechner M."/>
            <person name="Bartels D."/>
            <person name="Buhrmester J."/>
            <person name="Choudhuri J.V."/>
            <person name="Ebensen T."/>
            <person name="Gaigalat L."/>
            <person name="Herrmann S."/>
            <person name="Khachane A.N."/>
            <person name="Larisch C."/>
            <person name="Link S."/>
            <person name="Linke B."/>
            <person name="Meyer F."/>
            <person name="Mormann S."/>
            <person name="Nakunst D."/>
            <person name="Rueckert C."/>
            <person name="Schneiker-Bekel S."/>
            <person name="Schulze K."/>
            <person name="Voerholter F.-J."/>
            <person name="Yevsa T."/>
            <person name="Engle J.T."/>
            <person name="Goldman W.E."/>
            <person name="Puehler A."/>
            <person name="Goebel U.B."/>
            <person name="Goesmann A."/>
            <person name="Bloecker H."/>
            <person name="Kaiser O."/>
            <person name="Martinez-Arias R."/>
        </authorList>
    </citation>
    <scope>NUCLEOTIDE SEQUENCE [LARGE SCALE GENOMIC DNA]</scope>
    <source>
        <strain>ATCC BAA-461 / DSM 12804 / CCUG 43448</strain>
    </source>
</reference>
<proteinExistence type="inferred from homology"/>
<gene>
    <name evidence="1" type="primary">glgA</name>
    <name type="ordered locus">Bpet2372</name>
</gene>
<protein>
    <recommendedName>
        <fullName evidence="1">Glycogen synthase</fullName>
        <ecNumber evidence="1">2.4.1.21</ecNumber>
    </recommendedName>
    <alternativeName>
        <fullName evidence="1">Starch [bacterial glycogen] synthase</fullName>
    </alternativeName>
</protein>
<organism>
    <name type="scientific">Bordetella petrii (strain ATCC BAA-461 / DSM 12804 / CCUG 43448)</name>
    <dbReference type="NCBI Taxonomy" id="340100"/>
    <lineage>
        <taxon>Bacteria</taxon>
        <taxon>Pseudomonadati</taxon>
        <taxon>Pseudomonadota</taxon>
        <taxon>Betaproteobacteria</taxon>
        <taxon>Burkholderiales</taxon>
        <taxon>Alcaligenaceae</taxon>
        <taxon>Bordetella</taxon>
    </lineage>
</organism>
<dbReference type="EC" id="2.4.1.21" evidence="1"/>
<dbReference type="EMBL" id="AM902716">
    <property type="protein sequence ID" value="CAP42715.1"/>
    <property type="molecule type" value="Genomic_DNA"/>
</dbReference>
<dbReference type="SMR" id="A9IMI9"/>
<dbReference type="STRING" id="94624.Bpet2372"/>
<dbReference type="KEGG" id="bpt:Bpet2372"/>
<dbReference type="eggNOG" id="COG0297">
    <property type="taxonomic scope" value="Bacteria"/>
</dbReference>
<dbReference type="UniPathway" id="UPA00164"/>
<dbReference type="Proteomes" id="UP000001225">
    <property type="component" value="Chromosome"/>
</dbReference>
<dbReference type="GO" id="GO:0009011">
    <property type="term" value="F:alpha-1,4-glucan glucosyltransferase (ADP-glucose donor) activity"/>
    <property type="evidence" value="ECO:0007669"/>
    <property type="project" value="UniProtKB-UniRule"/>
</dbReference>
<dbReference type="GO" id="GO:0004373">
    <property type="term" value="F:alpha-1,4-glucan glucosyltransferase (UDP-glucose donor) activity"/>
    <property type="evidence" value="ECO:0007669"/>
    <property type="project" value="InterPro"/>
</dbReference>
<dbReference type="GO" id="GO:0005978">
    <property type="term" value="P:glycogen biosynthetic process"/>
    <property type="evidence" value="ECO:0007669"/>
    <property type="project" value="UniProtKB-UniRule"/>
</dbReference>
<dbReference type="CDD" id="cd03791">
    <property type="entry name" value="GT5_Glycogen_synthase_DULL1-like"/>
    <property type="match status" value="1"/>
</dbReference>
<dbReference type="Gene3D" id="3.40.50.2000">
    <property type="entry name" value="Glycogen Phosphorylase B"/>
    <property type="match status" value="2"/>
</dbReference>
<dbReference type="HAMAP" id="MF_00484">
    <property type="entry name" value="Glycogen_synth"/>
    <property type="match status" value="1"/>
</dbReference>
<dbReference type="InterPro" id="IPR001296">
    <property type="entry name" value="Glyco_trans_1"/>
</dbReference>
<dbReference type="InterPro" id="IPR011835">
    <property type="entry name" value="GS/SS"/>
</dbReference>
<dbReference type="InterPro" id="IPR013534">
    <property type="entry name" value="Starch_synth_cat_dom"/>
</dbReference>
<dbReference type="NCBIfam" id="TIGR02095">
    <property type="entry name" value="glgA"/>
    <property type="match status" value="1"/>
</dbReference>
<dbReference type="NCBIfam" id="NF001899">
    <property type="entry name" value="PRK00654.1-2"/>
    <property type="match status" value="1"/>
</dbReference>
<dbReference type="PANTHER" id="PTHR45825:SF11">
    <property type="entry name" value="ALPHA AMYLASE DOMAIN-CONTAINING PROTEIN"/>
    <property type="match status" value="1"/>
</dbReference>
<dbReference type="PANTHER" id="PTHR45825">
    <property type="entry name" value="GRANULE-BOUND STARCH SYNTHASE 1, CHLOROPLASTIC/AMYLOPLASTIC"/>
    <property type="match status" value="1"/>
</dbReference>
<dbReference type="Pfam" id="PF08323">
    <property type="entry name" value="Glyco_transf_5"/>
    <property type="match status" value="1"/>
</dbReference>
<dbReference type="Pfam" id="PF00534">
    <property type="entry name" value="Glycos_transf_1"/>
    <property type="match status" value="1"/>
</dbReference>
<dbReference type="SUPFAM" id="SSF53756">
    <property type="entry name" value="UDP-Glycosyltransferase/glycogen phosphorylase"/>
    <property type="match status" value="1"/>
</dbReference>
<name>GLGA_BORPD</name>
<comment type="function">
    <text evidence="1">Synthesizes alpha-1,4-glucan chains using ADP-glucose.</text>
</comment>
<comment type="catalytic activity">
    <reaction evidence="1">
        <text>[(1-&gt;4)-alpha-D-glucosyl](n) + ADP-alpha-D-glucose = [(1-&gt;4)-alpha-D-glucosyl](n+1) + ADP + H(+)</text>
        <dbReference type="Rhea" id="RHEA:18189"/>
        <dbReference type="Rhea" id="RHEA-COMP:9584"/>
        <dbReference type="Rhea" id="RHEA-COMP:9587"/>
        <dbReference type="ChEBI" id="CHEBI:15378"/>
        <dbReference type="ChEBI" id="CHEBI:15444"/>
        <dbReference type="ChEBI" id="CHEBI:57498"/>
        <dbReference type="ChEBI" id="CHEBI:456216"/>
        <dbReference type="EC" id="2.4.1.21"/>
    </reaction>
</comment>
<comment type="pathway">
    <text evidence="1">Glycan biosynthesis; glycogen biosynthesis.</text>
</comment>
<comment type="similarity">
    <text evidence="1">Belongs to the glycosyltransferase 1 family. Bacterial/plant glycogen synthase subfamily.</text>
</comment>